<keyword id="KW-0025">Alternative splicing</keyword>
<keyword id="KW-0966">Cell projection</keyword>
<keyword id="KW-0963">Cytoplasm</keyword>
<keyword id="KW-0488">Methylation</keyword>
<keyword id="KW-0539">Nucleus</keyword>
<keyword id="KW-0597">Phosphoprotein</keyword>
<keyword id="KW-1185">Reference proteome</keyword>
<keyword id="KW-0694">RNA-binding</keyword>
<keyword id="KW-0346">Stress response</keyword>
<name>RBM3_RAT</name>
<comment type="function">
    <text evidence="1 7">Cold-inducible mRNA binding protein that enhances global protein synthesis at both physiological and mild hypothermic temperatures. Reduces the relative abundance of microRNAs, when overexpressed (By similarity). Enhances phosphorylation of translation initiation factors and active polysome formation.</text>
</comment>
<comment type="subunit">
    <text evidence="6">Interacts with RPL4. Associates with the 60S ribosomal subunits.</text>
</comment>
<comment type="subcellular location">
    <subcellularLocation>
        <location evidence="7">Nucleus</location>
    </subcellularLocation>
    <subcellularLocation>
        <location evidence="7">Cytoplasm</location>
    </subcellularLocation>
    <subcellularLocation>
        <location evidence="7">Cell projection</location>
        <location evidence="7">Dendrite</location>
    </subcellularLocation>
    <text>Localizes in mRNA granules in dendrites. Isoform 1 shows a much higher dendritic localization than isoform 2.</text>
</comment>
<comment type="alternative products">
    <event type="alternative splicing"/>
    <isoform>
        <id>Q925G0-1</id>
        <name>1</name>
        <name>RBM3 Arg-</name>
        <sequence type="displayed"/>
    </isoform>
    <isoform>
        <id>Q925G0-2</id>
        <name>2</name>
        <name>RBM3 Arg+</name>
        <sequence type="described" ref="VSP_038576"/>
    </isoform>
</comment>
<comment type="tissue specificity">
    <text evidence="7">Widely expressed in the brain. Highly expressed in the cerebellum and olfactory bulb (at protein level). Expressed in neurons and glial cells.</text>
</comment>
<comment type="PTM">
    <text evidence="1">Arg-105 is dimethylated, probably to asymmetric dimethylarginine.</text>
</comment>
<comment type="PTM">
    <text evidence="7">Phosphorylated. Isoform 2 is methylated.</text>
</comment>
<dbReference type="EMBL" id="FM093406">
    <property type="status" value="NOT_ANNOTATED_CDS"/>
    <property type="molecule type" value="mRNA"/>
</dbReference>
<dbReference type="EMBL" id="AF355190">
    <property type="protein sequence ID" value="AAK39523.1"/>
    <property type="molecule type" value="mRNA"/>
</dbReference>
<dbReference type="RefSeq" id="NP_446148.1">
    <property type="nucleotide sequence ID" value="NM_053696.1"/>
</dbReference>
<dbReference type="SMR" id="Q925G0"/>
<dbReference type="BioGRID" id="250334">
    <property type="interactions" value="1"/>
</dbReference>
<dbReference type="FunCoup" id="Q925G0">
    <property type="interactions" value="2449"/>
</dbReference>
<dbReference type="IntAct" id="Q925G0">
    <property type="interactions" value="1"/>
</dbReference>
<dbReference type="MINT" id="Q925G0"/>
<dbReference type="STRING" id="10116.ENSRNOP00000007367"/>
<dbReference type="iPTMnet" id="Q925G0"/>
<dbReference type="PhosphoSitePlus" id="Q925G0"/>
<dbReference type="jPOST" id="Q925G0"/>
<dbReference type="PaxDb" id="10116-ENSRNOP00000007367"/>
<dbReference type="GeneID" id="114488"/>
<dbReference type="KEGG" id="rno:114488"/>
<dbReference type="UCSC" id="RGD:620145">
    <molecule id="Q925G0-1"/>
    <property type="organism name" value="rat"/>
</dbReference>
<dbReference type="AGR" id="RGD:620145"/>
<dbReference type="CTD" id="5935"/>
<dbReference type="RGD" id="620145">
    <property type="gene designation" value="Rbm3"/>
</dbReference>
<dbReference type="eggNOG" id="KOG0118">
    <property type="taxonomic scope" value="Eukaryota"/>
</dbReference>
<dbReference type="InParanoid" id="Q925G0"/>
<dbReference type="OrthoDB" id="4207594at2759"/>
<dbReference type="PhylomeDB" id="Q925G0"/>
<dbReference type="PRO" id="PR:Q925G0"/>
<dbReference type="Proteomes" id="UP000002494">
    <property type="component" value="Unplaced"/>
</dbReference>
<dbReference type="GO" id="GO:0005737">
    <property type="term" value="C:cytoplasm"/>
    <property type="evidence" value="ECO:0000314"/>
    <property type="project" value="UniProtKB"/>
</dbReference>
<dbReference type="GO" id="GO:0030425">
    <property type="term" value="C:dendrite"/>
    <property type="evidence" value="ECO:0000314"/>
    <property type="project" value="UniProtKB"/>
</dbReference>
<dbReference type="GO" id="GO:0005634">
    <property type="term" value="C:nucleus"/>
    <property type="evidence" value="ECO:0000314"/>
    <property type="project" value="UniProtKB"/>
</dbReference>
<dbReference type="GO" id="GO:0005681">
    <property type="term" value="C:spliceosomal complex"/>
    <property type="evidence" value="ECO:0000318"/>
    <property type="project" value="GO_Central"/>
</dbReference>
<dbReference type="GO" id="GO:0043023">
    <property type="term" value="F:ribosomal large subunit binding"/>
    <property type="evidence" value="ECO:0000266"/>
    <property type="project" value="RGD"/>
</dbReference>
<dbReference type="GO" id="GO:0003723">
    <property type="term" value="F:RNA binding"/>
    <property type="evidence" value="ECO:0000318"/>
    <property type="project" value="GO_Central"/>
</dbReference>
<dbReference type="GO" id="GO:0035196">
    <property type="term" value="P:miRNA processing"/>
    <property type="evidence" value="ECO:0000266"/>
    <property type="project" value="RGD"/>
</dbReference>
<dbReference type="GO" id="GO:0048026">
    <property type="term" value="P:positive regulation of mRNA splicing, via spliceosome"/>
    <property type="evidence" value="ECO:0000318"/>
    <property type="project" value="GO_Central"/>
</dbReference>
<dbReference type="GO" id="GO:0045727">
    <property type="term" value="P:positive regulation of translation"/>
    <property type="evidence" value="ECO:0000314"/>
    <property type="project" value="UniProtKB"/>
</dbReference>
<dbReference type="GO" id="GO:0006417">
    <property type="term" value="P:regulation of translation"/>
    <property type="evidence" value="ECO:0000250"/>
    <property type="project" value="UniProtKB"/>
</dbReference>
<dbReference type="GO" id="GO:0009409">
    <property type="term" value="P:response to cold"/>
    <property type="evidence" value="ECO:0000266"/>
    <property type="project" value="RGD"/>
</dbReference>
<dbReference type="GO" id="GO:0006412">
    <property type="term" value="P:translation"/>
    <property type="evidence" value="ECO:0000266"/>
    <property type="project" value="RGD"/>
</dbReference>
<dbReference type="CDD" id="cd12449">
    <property type="entry name" value="RRM_CIRBP_RBM3"/>
    <property type="match status" value="1"/>
</dbReference>
<dbReference type="FunFam" id="3.30.70.330:FF:000312">
    <property type="entry name" value="RNA-binding protein 3 isoform X1"/>
    <property type="match status" value="1"/>
</dbReference>
<dbReference type="Gene3D" id="3.30.70.330">
    <property type="match status" value="1"/>
</dbReference>
<dbReference type="InterPro" id="IPR012677">
    <property type="entry name" value="Nucleotide-bd_a/b_plait_sf"/>
</dbReference>
<dbReference type="InterPro" id="IPR035979">
    <property type="entry name" value="RBD_domain_sf"/>
</dbReference>
<dbReference type="InterPro" id="IPR050441">
    <property type="entry name" value="RBM"/>
</dbReference>
<dbReference type="InterPro" id="IPR034278">
    <property type="entry name" value="RBM3/CIRBP_RRM"/>
</dbReference>
<dbReference type="InterPro" id="IPR000504">
    <property type="entry name" value="RRM_dom"/>
</dbReference>
<dbReference type="PANTHER" id="PTHR48034">
    <property type="entry name" value="TRANSFORMER-2 SEX-DETERMINING PROTEIN-RELATED"/>
    <property type="match status" value="1"/>
</dbReference>
<dbReference type="Pfam" id="PF00076">
    <property type="entry name" value="RRM_1"/>
    <property type="match status" value="1"/>
</dbReference>
<dbReference type="SMART" id="SM00360">
    <property type="entry name" value="RRM"/>
    <property type="match status" value="1"/>
</dbReference>
<dbReference type="SUPFAM" id="SSF54928">
    <property type="entry name" value="RNA-binding domain, RBD"/>
    <property type="match status" value="1"/>
</dbReference>
<dbReference type="PROSITE" id="PS50102">
    <property type="entry name" value="RRM"/>
    <property type="match status" value="1"/>
</dbReference>
<organism>
    <name type="scientific">Rattus norvegicus</name>
    <name type="common">Rat</name>
    <dbReference type="NCBI Taxonomy" id="10116"/>
    <lineage>
        <taxon>Eukaryota</taxon>
        <taxon>Metazoa</taxon>
        <taxon>Chordata</taxon>
        <taxon>Craniata</taxon>
        <taxon>Vertebrata</taxon>
        <taxon>Euteleostomi</taxon>
        <taxon>Mammalia</taxon>
        <taxon>Eutheria</taxon>
        <taxon>Euarchontoglires</taxon>
        <taxon>Glires</taxon>
        <taxon>Rodentia</taxon>
        <taxon>Myomorpha</taxon>
        <taxon>Muroidea</taxon>
        <taxon>Muridae</taxon>
        <taxon>Murinae</taxon>
        <taxon>Rattus</taxon>
    </lineage>
</organism>
<protein>
    <recommendedName>
        <fullName>RNA-binding protein 3</fullName>
    </recommendedName>
    <alternativeName>
        <fullName>RNA-binding motif protein 3</fullName>
    </alternativeName>
</protein>
<sequence>MSSEEGKLFVGGLNFNTDEQALEDHFSSFGPISEVVVVKDRETQRSRGFGFITFTNPEHASDVMRAMNGESLDGRQIRVDHAGKSARGTRGGAFGAHGRGRSYSRGGGDQGYGSGRYDSRPGGYGYGYGRSRDYSGSQGGYDRYSGGNYRDNYDN</sequence>
<proteinExistence type="evidence at protein level"/>
<gene>
    <name type="primary">Rbm3</name>
</gene>
<evidence type="ECO:0000250" key="1"/>
<evidence type="ECO:0000250" key="2">
    <source>
        <dbReference type="UniProtKB" id="O89086"/>
    </source>
</evidence>
<evidence type="ECO:0000250" key="3">
    <source>
        <dbReference type="UniProtKB" id="P98179"/>
    </source>
</evidence>
<evidence type="ECO:0000255" key="4">
    <source>
        <dbReference type="PROSITE-ProRule" id="PRU00176"/>
    </source>
</evidence>
<evidence type="ECO:0000256" key="5">
    <source>
        <dbReference type="SAM" id="MobiDB-lite"/>
    </source>
</evidence>
<evidence type="ECO:0000269" key="6">
    <source>
    </source>
</evidence>
<evidence type="ECO:0000269" key="7">
    <source>
    </source>
</evidence>
<evidence type="ECO:0000305" key="8"/>
<accession>Q925G0</accession>
<reference key="1">
    <citation type="submission" date="2008-04" db="EMBL/GenBank/DDBJ databases">
        <authorList>
            <person name="Beck A."/>
        </authorList>
    </citation>
    <scope>NUCLEOTIDE SEQUENCE [LARGE SCALE MRNA]</scope>
</reference>
<reference key="2">
    <citation type="submission" date="2001-02" db="EMBL/GenBank/DDBJ databases">
        <title>Rat RNA-binding motif protein 3 (RBM3).</title>
        <authorList>
            <person name="Long X."/>
            <person name="Bigsby R.M."/>
            <person name="Nephew K.P."/>
        </authorList>
    </citation>
    <scope>NUCLEOTIDE SEQUENCE [LARGE SCALE MRNA] OF 1-127</scope>
    <source>
        <strain>Sprague-Dawley</strain>
    </source>
</reference>
<reference key="3">
    <citation type="journal article" date="2005" name="Proc. Natl. Acad. Sci. U.S.A.">
        <title>Cold stress-induced protein Rbm3 binds 60S ribosomal subunits, alters microRNA levels, and enhances global protein synthesis.</title>
        <authorList>
            <person name="Dresios J."/>
            <person name="Aschrafi A."/>
            <person name="Owens G.C."/>
            <person name="Vanderklish P.W."/>
            <person name="Edelman G.M."/>
            <person name="Mauro V.P."/>
        </authorList>
    </citation>
    <scope>INTERACTION WITH RPL4</scope>
    <scope>ASSOCIATION WITH RIBOSOMES</scope>
</reference>
<reference key="4">
    <citation type="journal article" date="2007" name="J. Neurochem.">
        <title>Two isoforms of the cold-inducible mRNA-binding protein RBM3 localize to dendrites and promote translation.</title>
        <authorList>
            <person name="Smart F."/>
            <person name="Aschrafi A."/>
            <person name="Atkins A."/>
            <person name="Owens G.C."/>
            <person name="Pilotte J."/>
            <person name="Cunningham B.A."/>
            <person name="Vanderklish P.W."/>
        </authorList>
    </citation>
    <scope>FUNCTION</scope>
    <scope>METHYLATION</scope>
    <scope>ASSOCIATION WITH RIBOSOMES</scope>
    <scope>SUBCELLULAR LOCATION</scope>
    <scope>PHOSPHORYLATION</scope>
    <scope>ALTERNATIVE SPLICING (ISOFORMS 1 AND 2)</scope>
    <scope>TISSUE SPECIFICITY</scope>
</reference>
<feature type="chain" id="PRO_0000390775" description="RNA-binding protein 3">
    <location>
        <begin position="1"/>
        <end position="155"/>
    </location>
</feature>
<feature type="domain" description="RRM" evidence="4">
    <location>
        <begin position="6"/>
        <end position="84"/>
    </location>
</feature>
<feature type="region of interest" description="Disordered" evidence="5">
    <location>
        <begin position="79"/>
        <end position="155"/>
    </location>
</feature>
<feature type="compositionally biased region" description="Gly residues" evidence="5">
    <location>
        <begin position="105"/>
        <end position="114"/>
    </location>
</feature>
<feature type="modified residue" description="Omega-N-methylarginine" evidence="3">
    <location>
        <position position="47"/>
    </location>
</feature>
<feature type="modified residue" description="Asymmetric dimethylarginine; alternate" evidence="2">
    <location>
        <position position="105"/>
    </location>
</feature>
<feature type="modified residue" description="Dimethylated arginine; alternate" evidence="3">
    <location>
        <position position="105"/>
    </location>
</feature>
<feature type="modified residue" description="Omega-N-methylarginine; alternate" evidence="3">
    <location>
        <position position="105"/>
    </location>
</feature>
<feature type="modified residue" description="Omega-N-methylarginine" evidence="3">
    <location>
        <position position="120"/>
    </location>
</feature>
<feature type="modified residue" description="Omega-N-methylarginine" evidence="3">
    <location>
        <position position="130"/>
    </location>
</feature>
<feature type="modified residue" description="Phosphoserine" evidence="2">
    <location>
        <position position="135"/>
    </location>
</feature>
<feature type="modified residue" description="Phosphoserine" evidence="3">
    <location>
        <position position="145"/>
    </location>
</feature>
<feature type="modified residue" description="Phosphotyrosine" evidence="3">
    <location>
        <position position="153"/>
    </location>
</feature>
<feature type="splice variant" id="VSP_038576" description="In isoform 2." evidence="8">
    <original>G</original>
    <variation>GA</variation>
    <location>
        <position position="136"/>
    </location>
</feature>
<feature type="sequence conflict" description="In Ref. 2; AAK39523." evidence="8" ref="2">
    <original>V</original>
    <variation>A</variation>
    <location>
        <position position="63"/>
    </location>
</feature>